<organism evidence="14">
    <name type="scientific">Drosophila melanogaster</name>
    <name type="common">Fruit fly</name>
    <dbReference type="NCBI Taxonomy" id="7227"/>
    <lineage>
        <taxon>Eukaryota</taxon>
        <taxon>Metazoa</taxon>
        <taxon>Ecdysozoa</taxon>
        <taxon>Arthropoda</taxon>
        <taxon>Hexapoda</taxon>
        <taxon>Insecta</taxon>
        <taxon>Pterygota</taxon>
        <taxon>Neoptera</taxon>
        <taxon>Endopterygota</taxon>
        <taxon>Diptera</taxon>
        <taxon>Brachycera</taxon>
        <taxon>Muscomorpha</taxon>
        <taxon>Ephydroidea</taxon>
        <taxon>Drosophilidae</taxon>
        <taxon>Drosophila</taxon>
        <taxon>Sophophora</taxon>
    </lineage>
</organism>
<protein>
    <recommendedName>
        <fullName evidence="8">Pyrokinin-1 receptor</fullName>
    </recommendedName>
</protein>
<evidence type="ECO:0000255" key="1"/>
<evidence type="ECO:0000255" key="2">
    <source>
        <dbReference type="PROSITE-ProRule" id="PRU00498"/>
    </source>
</evidence>
<evidence type="ECO:0000255" key="3">
    <source>
        <dbReference type="PROSITE-ProRule" id="PRU00521"/>
    </source>
</evidence>
<evidence type="ECO:0000255" key="4">
    <source>
        <dbReference type="RuleBase" id="RU000688"/>
    </source>
</evidence>
<evidence type="ECO:0000256" key="5">
    <source>
        <dbReference type="SAM" id="MobiDB-lite"/>
    </source>
</evidence>
<evidence type="ECO:0000269" key="6">
    <source>
    </source>
</evidence>
<evidence type="ECO:0000269" key="7">
    <source>
    </source>
</evidence>
<evidence type="ECO:0000303" key="8">
    <source>
    </source>
</evidence>
<evidence type="ECO:0000305" key="9"/>
<evidence type="ECO:0000312" key="10">
    <source>
        <dbReference type="EMBL" id="AAN10044.1"/>
    </source>
</evidence>
<evidence type="ECO:0000312" key="11">
    <source>
        <dbReference type="EMBL" id="AAQ15197.2"/>
    </source>
</evidence>
<evidence type="ECO:0000312" key="12">
    <source>
        <dbReference type="EMBL" id="ABI34173.1"/>
    </source>
</evidence>
<evidence type="ECO:0000312" key="13">
    <source>
        <dbReference type="FlyBase" id="FBgn0038201"/>
    </source>
</evidence>
<evidence type="ECO:0000312" key="14">
    <source>
        <dbReference type="Proteomes" id="UP000000803"/>
    </source>
</evidence>
<accession>Q8ITC9</accession>
<accession>Q0IGX8</accession>
<accession>Q71RH8</accession>
<sequence length="430" mass="47317">MSAGNMSHDLGPPRDPLAIVIPVTVVYSLIFITGVVGNISTCIVIKKNRSMHTATNYYLFSLAISDFLLLLSGVPQEVSYIWSKYPYVFGEYICIGRGLLAETSANATVLTITAFTVERYIAICHPFLGQAMSKLSRAIRIIVLVWIMAIVTAIPQAAQFGIEHYSGVEQCGIVRVIVKHSFQLSTFIFFLAPMSIILVLYLLIGVHLYRSTLVEGPASVARRQQLKSVPSDTILYRYGGSGTAMSFNGGGSGAGTAGLMGGSGAQLSSVRGRLNHYGTRRVLRMLVAVVVCFFLCWAPFHAQRLIAIYAPARGAKLRDQHEFVYTVMTYVSGVLYYLSTCINPLLYNIMSHKFREAFKAVLFGKKVSKGSLNSRNNIESRRLRRALTNSSQTQRFSIESAEQPKPSIMQNPTNKPPVAAQYAMIGVQVN</sequence>
<reference evidence="10" key="1">
    <citation type="journal article" date="2002" name="Proc. Natl. Acad. Sci. U.S.A.">
        <title>Identification of G protein-coupled receptors for Drosophila PRXamide peptides, CCAP, corazonin, and AKH supports a theory of ligand-receptor coevolution.</title>
        <authorList>
            <person name="Park Y."/>
            <person name="Kim Y.-J."/>
            <person name="Adams M.E."/>
        </authorList>
    </citation>
    <scope>NUCLEOTIDE SEQUENCE [MRNA]</scope>
    <scope>FUNCTION</scope>
    <scope>SUBCELLULAR LOCATION</scope>
    <source>
        <strain evidence="10">Canton-S</strain>
    </source>
</reference>
<reference evidence="11" key="2">
    <citation type="journal article" date="2005" name="Biochem. Biophys. Res. Commun.">
        <title>The Drosophila gene CG9918 codes for a pyrokinin-1 receptor.</title>
        <authorList>
            <person name="Cazzamali G."/>
            <person name="Torp M."/>
            <person name="Hauser F."/>
            <person name="Williamson M."/>
            <person name="Grimmelikhuijzen C.J."/>
        </authorList>
    </citation>
    <scope>NUCLEOTIDE SEQUENCE [MRNA]</scope>
    <scope>FUNCTION</scope>
    <scope>SUBCELLULAR LOCATION</scope>
</reference>
<reference evidence="14" key="3">
    <citation type="journal article" date="2000" name="Science">
        <title>The genome sequence of Drosophila melanogaster.</title>
        <authorList>
            <person name="Adams M.D."/>
            <person name="Celniker S.E."/>
            <person name="Holt R.A."/>
            <person name="Evans C.A."/>
            <person name="Gocayne J.D."/>
            <person name="Amanatides P.G."/>
            <person name="Scherer S.E."/>
            <person name="Li P.W."/>
            <person name="Hoskins R.A."/>
            <person name="Galle R.F."/>
            <person name="George R.A."/>
            <person name="Lewis S.E."/>
            <person name="Richards S."/>
            <person name="Ashburner M."/>
            <person name="Henderson S.N."/>
            <person name="Sutton G.G."/>
            <person name="Wortman J.R."/>
            <person name="Yandell M.D."/>
            <person name="Zhang Q."/>
            <person name="Chen L.X."/>
            <person name="Brandon R.C."/>
            <person name="Rogers Y.-H.C."/>
            <person name="Blazej R.G."/>
            <person name="Champe M."/>
            <person name="Pfeiffer B.D."/>
            <person name="Wan K.H."/>
            <person name="Doyle C."/>
            <person name="Baxter E.G."/>
            <person name="Helt G."/>
            <person name="Nelson C.R."/>
            <person name="Miklos G.L.G."/>
            <person name="Abril J.F."/>
            <person name="Agbayani A."/>
            <person name="An H.-J."/>
            <person name="Andrews-Pfannkoch C."/>
            <person name="Baldwin D."/>
            <person name="Ballew R.M."/>
            <person name="Basu A."/>
            <person name="Baxendale J."/>
            <person name="Bayraktaroglu L."/>
            <person name="Beasley E.M."/>
            <person name="Beeson K.Y."/>
            <person name="Benos P.V."/>
            <person name="Berman B.P."/>
            <person name="Bhandari D."/>
            <person name="Bolshakov S."/>
            <person name="Borkova D."/>
            <person name="Botchan M.R."/>
            <person name="Bouck J."/>
            <person name="Brokstein P."/>
            <person name="Brottier P."/>
            <person name="Burtis K.C."/>
            <person name="Busam D.A."/>
            <person name="Butler H."/>
            <person name="Cadieu E."/>
            <person name="Center A."/>
            <person name="Chandra I."/>
            <person name="Cherry J.M."/>
            <person name="Cawley S."/>
            <person name="Dahlke C."/>
            <person name="Davenport L.B."/>
            <person name="Davies P."/>
            <person name="de Pablos B."/>
            <person name="Delcher A."/>
            <person name="Deng Z."/>
            <person name="Mays A.D."/>
            <person name="Dew I."/>
            <person name="Dietz S.M."/>
            <person name="Dodson K."/>
            <person name="Doup L.E."/>
            <person name="Downes M."/>
            <person name="Dugan-Rocha S."/>
            <person name="Dunkov B.C."/>
            <person name="Dunn P."/>
            <person name="Durbin K.J."/>
            <person name="Evangelista C.C."/>
            <person name="Ferraz C."/>
            <person name="Ferriera S."/>
            <person name="Fleischmann W."/>
            <person name="Fosler C."/>
            <person name="Gabrielian A.E."/>
            <person name="Garg N.S."/>
            <person name="Gelbart W.M."/>
            <person name="Glasser K."/>
            <person name="Glodek A."/>
            <person name="Gong F."/>
            <person name="Gorrell J.H."/>
            <person name="Gu Z."/>
            <person name="Guan P."/>
            <person name="Harris M."/>
            <person name="Harris N.L."/>
            <person name="Harvey D.A."/>
            <person name="Heiman T.J."/>
            <person name="Hernandez J.R."/>
            <person name="Houck J."/>
            <person name="Hostin D."/>
            <person name="Houston K.A."/>
            <person name="Howland T.J."/>
            <person name="Wei M.-H."/>
            <person name="Ibegwam C."/>
            <person name="Jalali M."/>
            <person name="Kalush F."/>
            <person name="Karpen G.H."/>
            <person name="Ke Z."/>
            <person name="Kennison J.A."/>
            <person name="Ketchum K.A."/>
            <person name="Kimmel B.E."/>
            <person name="Kodira C.D."/>
            <person name="Kraft C.L."/>
            <person name="Kravitz S."/>
            <person name="Kulp D."/>
            <person name="Lai Z."/>
            <person name="Lasko P."/>
            <person name="Lei Y."/>
            <person name="Levitsky A.A."/>
            <person name="Li J.H."/>
            <person name="Li Z."/>
            <person name="Liang Y."/>
            <person name="Lin X."/>
            <person name="Liu X."/>
            <person name="Mattei B."/>
            <person name="McIntosh T.C."/>
            <person name="McLeod M.P."/>
            <person name="McPherson D."/>
            <person name="Merkulov G."/>
            <person name="Milshina N.V."/>
            <person name="Mobarry C."/>
            <person name="Morris J."/>
            <person name="Moshrefi A."/>
            <person name="Mount S.M."/>
            <person name="Moy M."/>
            <person name="Murphy B."/>
            <person name="Murphy L."/>
            <person name="Muzny D.M."/>
            <person name="Nelson D.L."/>
            <person name="Nelson D.R."/>
            <person name="Nelson K.A."/>
            <person name="Nixon K."/>
            <person name="Nusskern D.R."/>
            <person name="Pacleb J.M."/>
            <person name="Palazzolo M."/>
            <person name="Pittman G.S."/>
            <person name="Pan S."/>
            <person name="Pollard J."/>
            <person name="Puri V."/>
            <person name="Reese M.G."/>
            <person name="Reinert K."/>
            <person name="Remington K."/>
            <person name="Saunders R.D.C."/>
            <person name="Scheeler F."/>
            <person name="Shen H."/>
            <person name="Shue B.C."/>
            <person name="Siden-Kiamos I."/>
            <person name="Simpson M."/>
            <person name="Skupski M.P."/>
            <person name="Smith T.J."/>
            <person name="Spier E."/>
            <person name="Spradling A.C."/>
            <person name="Stapleton M."/>
            <person name="Strong R."/>
            <person name="Sun E."/>
            <person name="Svirskas R."/>
            <person name="Tector C."/>
            <person name="Turner R."/>
            <person name="Venter E."/>
            <person name="Wang A.H."/>
            <person name="Wang X."/>
            <person name="Wang Z.-Y."/>
            <person name="Wassarman D.A."/>
            <person name="Weinstock G.M."/>
            <person name="Weissenbach J."/>
            <person name="Williams S.M."/>
            <person name="Woodage T."/>
            <person name="Worley K.C."/>
            <person name="Wu D."/>
            <person name="Yang S."/>
            <person name="Yao Q.A."/>
            <person name="Ye J."/>
            <person name="Yeh R.-F."/>
            <person name="Zaveri J.S."/>
            <person name="Zhan M."/>
            <person name="Zhang G."/>
            <person name="Zhao Q."/>
            <person name="Zheng L."/>
            <person name="Zheng X.H."/>
            <person name="Zhong F.N."/>
            <person name="Zhong W."/>
            <person name="Zhou X."/>
            <person name="Zhu S.C."/>
            <person name="Zhu X."/>
            <person name="Smith H.O."/>
            <person name="Gibbs R.A."/>
            <person name="Myers E.W."/>
            <person name="Rubin G.M."/>
            <person name="Venter J.C."/>
        </authorList>
    </citation>
    <scope>NUCLEOTIDE SEQUENCE [LARGE SCALE GENOMIC DNA]</scope>
    <source>
        <strain evidence="14">Berkeley</strain>
    </source>
</reference>
<reference evidence="14" key="4">
    <citation type="journal article" date="2002" name="Genome Biol.">
        <title>Annotation of the Drosophila melanogaster euchromatic genome: a systematic review.</title>
        <authorList>
            <person name="Misra S."/>
            <person name="Crosby M.A."/>
            <person name="Mungall C.J."/>
            <person name="Matthews B.B."/>
            <person name="Campbell K.S."/>
            <person name="Hradecky P."/>
            <person name="Huang Y."/>
            <person name="Kaminker J.S."/>
            <person name="Millburn G.H."/>
            <person name="Prochnik S.E."/>
            <person name="Smith C.D."/>
            <person name="Tupy J.L."/>
            <person name="Whitfield E.J."/>
            <person name="Bayraktaroglu L."/>
            <person name="Berman B.P."/>
            <person name="Bettencourt B.R."/>
            <person name="Celniker S.E."/>
            <person name="de Grey A.D.N.J."/>
            <person name="Drysdale R.A."/>
            <person name="Harris N.L."/>
            <person name="Richter J."/>
            <person name="Russo S."/>
            <person name="Schroeder A.J."/>
            <person name="Shu S.Q."/>
            <person name="Stapleton M."/>
            <person name="Yamada C."/>
            <person name="Ashburner M."/>
            <person name="Gelbart W.M."/>
            <person name="Rubin G.M."/>
            <person name="Lewis S.E."/>
        </authorList>
    </citation>
    <scope>GENOME REANNOTATION</scope>
    <source>
        <strain evidence="14">Berkeley</strain>
    </source>
</reference>
<reference evidence="12" key="5">
    <citation type="submission" date="2006-08" db="EMBL/GenBank/DDBJ databases">
        <authorList>
            <person name="Stapleton M."/>
            <person name="Carlson J."/>
            <person name="Chavez C."/>
            <person name="Frise E."/>
            <person name="George R."/>
            <person name="Pacleb J."/>
            <person name="Park S."/>
            <person name="Wan K."/>
            <person name="Yu C."/>
            <person name="Celniker S."/>
        </authorList>
    </citation>
    <scope>NUCLEOTIDE SEQUENCE [LARGE SCALE MRNA]</scope>
    <source>
        <strain evidence="12">Berkeley</strain>
    </source>
</reference>
<keyword id="KW-1003">Cell membrane</keyword>
<keyword id="KW-1015">Disulfide bond</keyword>
<keyword id="KW-0297">G-protein coupled receptor</keyword>
<keyword id="KW-0325">Glycoprotein</keyword>
<keyword id="KW-0472">Membrane</keyword>
<keyword id="KW-0675">Receptor</keyword>
<keyword id="KW-1185">Reference proteome</keyword>
<keyword id="KW-0807">Transducer</keyword>
<keyword id="KW-0812">Transmembrane</keyword>
<keyword id="KW-1133">Transmembrane helix</keyword>
<proteinExistence type="evidence at transcript level"/>
<name>PK1R_DROME</name>
<dbReference type="EMBL" id="AF522191">
    <property type="protein sequence ID" value="AAN10044.1"/>
    <property type="molecule type" value="mRNA"/>
</dbReference>
<dbReference type="EMBL" id="AF368273">
    <property type="protein sequence ID" value="AAQ15197.2"/>
    <property type="molecule type" value="mRNA"/>
</dbReference>
<dbReference type="EMBL" id="AE014297">
    <property type="protein sequence ID" value="AAX52950.1"/>
    <property type="molecule type" value="Genomic_DNA"/>
</dbReference>
<dbReference type="EMBL" id="AE014297">
    <property type="protein sequence ID" value="AFH06407.1"/>
    <property type="molecule type" value="Genomic_DNA"/>
</dbReference>
<dbReference type="EMBL" id="BT028792">
    <property type="protein sequence ID" value="ABI34173.1"/>
    <property type="status" value="ALT_SEQ"/>
    <property type="molecule type" value="mRNA"/>
</dbReference>
<dbReference type="RefSeq" id="NP_001014620.1">
    <property type="nucleotide sequence ID" value="NM_001014620.2"/>
</dbReference>
<dbReference type="RefSeq" id="NP_001247089.1">
    <property type="nucleotide sequence ID" value="NM_001260160.1"/>
</dbReference>
<dbReference type="SMR" id="Q8ITC9"/>
<dbReference type="FunCoup" id="Q8ITC9">
    <property type="interactions" value="87"/>
</dbReference>
<dbReference type="IntAct" id="Q8ITC9">
    <property type="interactions" value="1"/>
</dbReference>
<dbReference type="STRING" id="7227.FBpp0296961"/>
<dbReference type="GlyCosmos" id="Q8ITC9">
    <property type="glycosylation" value="1 site, No reported glycans"/>
</dbReference>
<dbReference type="GlyGen" id="Q8ITC9">
    <property type="glycosylation" value="1 site"/>
</dbReference>
<dbReference type="PaxDb" id="7227-FBpp0296961"/>
<dbReference type="EnsemblMetazoa" id="FBtr0100131">
    <property type="protein sequence ID" value="FBpp0099477"/>
    <property type="gene ID" value="FBgn0038201"/>
</dbReference>
<dbReference type="EnsemblMetazoa" id="FBtr0305681">
    <property type="protein sequence ID" value="FBpp0296961"/>
    <property type="gene ID" value="FBgn0038201"/>
</dbReference>
<dbReference type="GeneID" id="41713"/>
<dbReference type="KEGG" id="dme:Dmel_CG9918"/>
<dbReference type="UCSC" id="CG9918-RD">
    <property type="organism name" value="d. melanogaster"/>
</dbReference>
<dbReference type="AGR" id="FB:FBgn0038201"/>
<dbReference type="CTD" id="41713"/>
<dbReference type="FlyBase" id="FBgn0038201">
    <property type="gene designation" value="PK1-R"/>
</dbReference>
<dbReference type="VEuPathDB" id="VectorBase:FBgn0038201"/>
<dbReference type="eggNOG" id="KOG3656">
    <property type="taxonomic scope" value="Eukaryota"/>
</dbReference>
<dbReference type="GeneTree" id="ENSGT01120000271823"/>
<dbReference type="HOGENOM" id="CLU_009579_6_5_1"/>
<dbReference type="InParanoid" id="Q8ITC9"/>
<dbReference type="OMA" id="FSFVVEW"/>
<dbReference type="OrthoDB" id="5950040at2759"/>
<dbReference type="PhylomeDB" id="Q8ITC9"/>
<dbReference type="Reactome" id="R-DME-416476">
    <property type="pathway name" value="G alpha (q) signalling events"/>
</dbReference>
<dbReference type="BioGRID-ORCS" id="41713">
    <property type="hits" value="0 hits in 3 CRISPR screens"/>
</dbReference>
<dbReference type="GenomeRNAi" id="41713"/>
<dbReference type="PRO" id="PR:Q8ITC9"/>
<dbReference type="Proteomes" id="UP000000803">
    <property type="component" value="Chromosome 3R"/>
</dbReference>
<dbReference type="Bgee" id="FBgn0038201">
    <property type="expression patterns" value="Expressed in epithelial cell in haltere and 20 other cell types or tissues"/>
</dbReference>
<dbReference type="GO" id="GO:0016020">
    <property type="term" value="C:membrane"/>
    <property type="evidence" value="ECO:0000250"/>
    <property type="project" value="FlyBase"/>
</dbReference>
<dbReference type="GO" id="GO:0005886">
    <property type="term" value="C:plasma membrane"/>
    <property type="evidence" value="ECO:0000314"/>
    <property type="project" value="FlyBase"/>
</dbReference>
<dbReference type="GO" id="GO:0004930">
    <property type="term" value="F:G protein-coupled receptor activity"/>
    <property type="evidence" value="ECO:0000314"/>
    <property type="project" value="FlyBase"/>
</dbReference>
<dbReference type="GO" id="GO:0008188">
    <property type="term" value="F:neuropeptide receptor activity"/>
    <property type="evidence" value="ECO:0000255"/>
    <property type="project" value="FlyBase"/>
</dbReference>
<dbReference type="GO" id="GO:0036401">
    <property type="term" value="F:pyrokinin receptor activity"/>
    <property type="evidence" value="ECO:0000353"/>
    <property type="project" value="FlyBase"/>
</dbReference>
<dbReference type="GO" id="GO:0007186">
    <property type="term" value="P:G protein-coupled receptor signaling pathway"/>
    <property type="evidence" value="ECO:0000250"/>
    <property type="project" value="FlyBase"/>
</dbReference>
<dbReference type="GO" id="GO:0090278">
    <property type="term" value="P:negative regulation of peptide hormone secretion"/>
    <property type="evidence" value="ECO:0000315"/>
    <property type="project" value="FlyBase"/>
</dbReference>
<dbReference type="GO" id="GO:0007218">
    <property type="term" value="P:neuropeptide signaling pathway"/>
    <property type="evidence" value="ECO:0000314"/>
    <property type="project" value="FlyBase"/>
</dbReference>
<dbReference type="GO" id="GO:0070328">
    <property type="term" value="P:triglyceride homeostasis"/>
    <property type="evidence" value="ECO:0000315"/>
    <property type="project" value="FlyBase"/>
</dbReference>
<dbReference type="CDD" id="cd15134">
    <property type="entry name" value="7tmA_capaR"/>
    <property type="match status" value="1"/>
</dbReference>
<dbReference type="Gene3D" id="1.20.1070.10">
    <property type="entry name" value="Rhodopsin 7-helix transmembrane proteins"/>
    <property type="match status" value="1"/>
</dbReference>
<dbReference type="InterPro" id="IPR000276">
    <property type="entry name" value="GPCR_Rhodpsn"/>
</dbReference>
<dbReference type="InterPro" id="IPR017452">
    <property type="entry name" value="GPCR_Rhodpsn_7TM"/>
</dbReference>
<dbReference type="PANTHER" id="PTHR24243">
    <property type="entry name" value="G-PROTEIN COUPLED RECEPTOR"/>
    <property type="match status" value="1"/>
</dbReference>
<dbReference type="PANTHER" id="PTHR24243:SF208">
    <property type="entry name" value="PYROKININ-1 RECEPTOR"/>
    <property type="match status" value="1"/>
</dbReference>
<dbReference type="Pfam" id="PF00001">
    <property type="entry name" value="7tm_1"/>
    <property type="match status" value="1"/>
</dbReference>
<dbReference type="PRINTS" id="PR00237">
    <property type="entry name" value="GPCRRHODOPSN"/>
</dbReference>
<dbReference type="SUPFAM" id="SSF81321">
    <property type="entry name" value="Family A G protein-coupled receptor-like"/>
    <property type="match status" value="1"/>
</dbReference>
<dbReference type="PROSITE" id="PS00237">
    <property type="entry name" value="G_PROTEIN_RECEP_F1_1"/>
    <property type="match status" value="1"/>
</dbReference>
<dbReference type="PROSITE" id="PS50262">
    <property type="entry name" value="G_PROTEIN_RECEP_F1_2"/>
    <property type="match status" value="1"/>
</dbReference>
<comment type="function">
    <text evidence="6 7">Receptor for the neuropeptide CAP-3/pyrokinin-1 (TGPSASSGLWFGPRL-amide) (PubMed:16054112). Also activated weakly by other neuropeptides terminating in the sequence PRL-amide including pyrokinin-2, Hug-gamma, and ecdysis-triggering-hormone-1 (PubMed:12177421, PubMed:16054112). The activity of this receptor is mediated by G proteins which activate a phosphatidyl-inositol-calcium second messenger system (PubMed:16054112).</text>
</comment>
<comment type="subcellular location">
    <subcellularLocation>
        <location evidence="6 7">Cell membrane</location>
        <topology evidence="1">Multi-pass membrane protein</topology>
    </subcellularLocation>
</comment>
<comment type="similarity">
    <text evidence="4 9">Belongs to the G-protein coupled receptor 1 family.</text>
</comment>
<comment type="sequence caution" evidence="9">
    <conflict type="miscellaneous discrepancy">
        <sequence resource="EMBL-CDS" id="ABI34173"/>
    </conflict>
    <text>Intron retention.</text>
</comment>
<feature type="chain" id="PRO_0000439215" description="Pyrokinin-1 receptor">
    <location>
        <begin position="1"/>
        <end position="430"/>
    </location>
</feature>
<feature type="topological domain" description="Extracellular" evidence="9">
    <location>
        <begin position="1"/>
        <end position="16"/>
    </location>
</feature>
<feature type="transmembrane region" description="Helical; Name=1" evidence="1">
    <location>
        <begin position="17"/>
        <end position="37"/>
    </location>
</feature>
<feature type="topological domain" description="Cytoplasmic" evidence="9">
    <location>
        <begin position="38"/>
        <end position="53"/>
    </location>
</feature>
<feature type="transmembrane region" description="Helical; Name=2" evidence="1">
    <location>
        <begin position="54"/>
        <end position="74"/>
    </location>
</feature>
<feature type="topological domain" description="Extracellular" evidence="9">
    <location>
        <begin position="75"/>
        <end position="96"/>
    </location>
</feature>
<feature type="transmembrane region" description="Helical; Name=3" evidence="1">
    <location>
        <begin position="97"/>
        <end position="117"/>
    </location>
</feature>
<feature type="topological domain" description="Cytoplasmic" evidence="9">
    <location>
        <begin position="118"/>
        <end position="140"/>
    </location>
</feature>
<feature type="transmembrane region" description="Helical; Name=4" evidence="1">
    <location>
        <begin position="141"/>
        <end position="161"/>
    </location>
</feature>
<feature type="topological domain" description="Extracellular" evidence="9">
    <location>
        <begin position="162"/>
        <end position="185"/>
    </location>
</feature>
<feature type="transmembrane region" description="Helical; Name=5" evidence="1">
    <location>
        <begin position="186"/>
        <end position="206"/>
    </location>
</feature>
<feature type="topological domain" description="Cytoplasmic" evidence="9">
    <location>
        <begin position="207"/>
        <end position="281"/>
    </location>
</feature>
<feature type="transmembrane region" description="Helical; Name=6" evidence="1">
    <location>
        <begin position="282"/>
        <end position="302"/>
    </location>
</feature>
<feature type="topological domain" description="Extracellular" evidence="9">
    <location>
        <begin position="303"/>
        <end position="321"/>
    </location>
</feature>
<feature type="transmembrane region" description="Helical; Name=7" evidence="1">
    <location>
        <begin position="322"/>
        <end position="342"/>
    </location>
</feature>
<feature type="topological domain" description="Cytoplasmic" evidence="9">
    <location>
        <begin position="343"/>
        <end position="430"/>
    </location>
</feature>
<feature type="region of interest" description="Disordered" evidence="5">
    <location>
        <begin position="388"/>
        <end position="413"/>
    </location>
</feature>
<feature type="compositionally biased region" description="Polar residues" evidence="5">
    <location>
        <begin position="388"/>
        <end position="397"/>
    </location>
</feature>
<feature type="glycosylation site" description="N-linked (GlcNAc...) asparagine" evidence="2">
    <location>
        <position position="5"/>
    </location>
</feature>
<feature type="disulfide bond" evidence="3">
    <location>
        <begin position="94"/>
        <end position="171"/>
    </location>
</feature>
<gene>
    <name evidence="13" type="primary">PK1-R</name>
    <name evidence="13" type="ORF">CG9918</name>
</gene>